<keyword id="KW-0997">Cell inner membrane</keyword>
<keyword id="KW-1003">Cell membrane</keyword>
<keyword id="KW-0472">Membrane</keyword>
<keyword id="KW-0520">NAD</keyword>
<keyword id="KW-0874">Quinone</keyword>
<keyword id="KW-1278">Translocase</keyword>
<keyword id="KW-0812">Transmembrane</keyword>
<keyword id="KW-1133">Transmembrane helix</keyword>
<keyword id="KW-0813">Transport</keyword>
<keyword id="KW-0830">Ubiquinone</keyword>
<name>NUOK_BRUAB</name>
<comment type="function">
    <text evidence="1">NDH-1 shuttles electrons from NADH, via FMN and iron-sulfur (Fe-S) centers, to quinones in the respiratory chain. The immediate electron acceptor for the enzyme in this species is believed to be ubiquinone. Couples the redox reaction to proton translocation (for every two electrons transferred, four hydrogen ions are translocated across the cytoplasmic membrane), and thus conserves the redox energy in a proton gradient.</text>
</comment>
<comment type="catalytic activity">
    <reaction evidence="1">
        <text>a quinone + NADH + 5 H(+)(in) = a quinol + NAD(+) + 4 H(+)(out)</text>
        <dbReference type="Rhea" id="RHEA:57888"/>
        <dbReference type="ChEBI" id="CHEBI:15378"/>
        <dbReference type="ChEBI" id="CHEBI:24646"/>
        <dbReference type="ChEBI" id="CHEBI:57540"/>
        <dbReference type="ChEBI" id="CHEBI:57945"/>
        <dbReference type="ChEBI" id="CHEBI:132124"/>
    </reaction>
</comment>
<comment type="subunit">
    <text evidence="1">NDH-1 is composed of 14 different subunits. Subunits NuoA, H, J, K, L, M, N constitute the membrane sector of the complex.</text>
</comment>
<comment type="subcellular location">
    <subcellularLocation>
        <location evidence="1">Cell inner membrane</location>
        <topology evidence="1">Multi-pass membrane protein</topology>
    </subcellularLocation>
</comment>
<comment type="similarity">
    <text evidence="1">Belongs to the complex I subunit 4L family.</text>
</comment>
<proteinExistence type="inferred from homology"/>
<accession>Q57DU1</accession>
<sequence length="102" mass="10942">MEIGIAHYLTVSAILFTLGVFGIFLNRKNVIVILMSIELILLSVNLNFVAFSSQLGDLVGQVFALFVLTVAAAEAAIGLAILVVFFRNRGSIAVEDVNVMKG</sequence>
<protein>
    <recommendedName>
        <fullName evidence="1">NADH-quinone oxidoreductase subunit K</fullName>
        <ecNumber evidence="1">7.1.1.-</ecNumber>
    </recommendedName>
    <alternativeName>
        <fullName evidence="1">NADH dehydrogenase I subunit K</fullName>
    </alternativeName>
    <alternativeName>
        <fullName evidence="1">NDH-1 subunit K</fullName>
    </alternativeName>
</protein>
<gene>
    <name evidence="1" type="primary">nuoK</name>
    <name type="ordered locus">BruAb1_0826</name>
</gene>
<feature type="chain" id="PRO_0000389970" description="NADH-quinone oxidoreductase subunit K">
    <location>
        <begin position="1"/>
        <end position="102"/>
    </location>
</feature>
<feature type="transmembrane region" description="Helical" evidence="1">
    <location>
        <begin position="5"/>
        <end position="25"/>
    </location>
</feature>
<feature type="transmembrane region" description="Helical" evidence="1">
    <location>
        <begin position="31"/>
        <end position="51"/>
    </location>
</feature>
<feature type="transmembrane region" description="Helical" evidence="1">
    <location>
        <begin position="66"/>
        <end position="86"/>
    </location>
</feature>
<organism>
    <name type="scientific">Brucella abortus biovar 1 (strain 9-941)</name>
    <dbReference type="NCBI Taxonomy" id="262698"/>
    <lineage>
        <taxon>Bacteria</taxon>
        <taxon>Pseudomonadati</taxon>
        <taxon>Pseudomonadota</taxon>
        <taxon>Alphaproteobacteria</taxon>
        <taxon>Hyphomicrobiales</taxon>
        <taxon>Brucellaceae</taxon>
        <taxon>Brucella/Ochrobactrum group</taxon>
        <taxon>Brucella</taxon>
    </lineage>
</organism>
<evidence type="ECO:0000255" key="1">
    <source>
        <dbReference type="HAMAP-Rule" id="MF_01456"/>
    </source>
</evidence>
<dbReference type="EC" id="7.1.1.-" evidence="1"/>
<dbReference type="EMBL" id="AE017223">
    <property type="protein sequence ID" value="AAX74193.1"/>
    <property type="molecule type" value="Genomic_DNA"/>
</dbReference>
<dbReference type="RefSeq" id="WP_002963947.1">
    <property type="nucleotide sequence ID" value="NC_006932.1"/>
</dbReference>
<dbReference type="SMR" id="Q57DU1"/>
<dbReference type="EnsemblBacteria" id="AAX74193">
    <property type="protein sequence ID" value="AAX74193"/>
    <property type="gene ID" value="BruAb1_0826"/>
</dbReference>
<dbReference type="GeneID" id="97533881"/>
<dbReference type="KEGG" id="bmb:BruAb1_0826"/>
<dbReference type="HOGENOM" id="CLU_144724_2_0_5"/>
<dbReference type="Proteomes" id="UP000000540">
    <property type="component" value="Chromosome I"/>
</dbReference>
<dbReference type="GO" id="GO:0030964">
    <property type="term" value="C:NADH dehydrogenase complex"/>
    <property type="evidence" value="ECO:0007669"/>
    <property type="project" value="TreeGrafter"/>
</dbReference>
<dbReference type="GO" id="GO:0005886">
    <property type="term" value="C:plasma membrane"/>
    <property type="evidence" value="ECO:0007669"/>
    <property type="project" value="UniProtKB-SubCell"/>
</dbReference>
<dbReference type="GO" id="GO:0050136">
    <property type="term" value="F:NADH:ubiquinone reductase (non-electrogenic) activity"/>
    <property type="evidence" value="ECO:0007669"/>
    <property type="project" value="UniProtKB-UniRule"/>
</dbReference>
<dbReference type="GO" id="GO:0048038">
    <property type="term" value="F:quinone binding"/>
    <property type="evidence" value="ECO:0007669"/>
    <property type="project" value="UniProtKB-KW"/>
</dbReference>
<dbReference type="GO" id="GO:0042773">
    <property type="term" value="P:ATP synthesis coupled electron transport"/>
    <property type="evidence" value="ECO:0007669"/>
    <property type="project" value="InterPro"/>
</dbReference>
<dbReference type="FunFam" id="1.10.287.3510:FF:000001">
    <property type="entry name" value="NADH-quinone oxidoreductase subunit K"/>
    <property type="match status" value="1"/>
</dbReference>
<dbReference type="Gene3D" id="1.10.287.3510">
    <property type="match status" value="1"/>
</dbReference>
<dbReference type="HAMAP" id="MF_01456">
    <property type="entry name" value="NDH1_NuoK"/>
    <property type="match status" value="1"/>
</dbReference>
<dbReference type="InterPro" id="IPR001133">
    <property type="entry name" value="NADH_UbQ_OxRdtase_chain4L/K"/>
</dbReference>
<dbReference type="InterPro" id="IPR039428">
    <property type="entry name" value="NUOK/Mnh_C1-like"/>
</dbReference>
<dbReference type="NCBIfam" id="NF004320">
    <property type="entry name" value="PRK05715.1-2"/>
    <property type="match status" value="1"/>
</dbReference>
<dbReference type="NCBIfam" id="NF004321">
    <property type="entry name" value="PRK05715.1-3"/>
    <property type="match status" value="1"/>
</dbReference>
<dbReference type="NCBIfam" id="NF004323">
    <property type="entry name" value="PRK05715.1-5"/>
    <property type="match status" value="1"/>
</dbReference>
<dbReference type="PANTHER" id="PTHR11434:SF21">
    <property type="entry name" value="NADH DEHYDROGENASE SUBUNIT 4L-RELATED"/>
    <property type="match status" value="1"/>
</dbReference>
<dbReference type="PANTHER" id="PTHR11434">
    <property type="entry name" value="NADH-UBIQUINONE OXIDOREDUCTASE SUBUNIT ND4L"/>
    <property type="match status" value="1"/>
</dbReference>
<dbReference type="Pfam" id="PF00420">
    <property type="entry name" value="Oxidored_q2"/>
    <property type="match status" value="1"/>
</dbReference>
<reference key="1">
    <citation type="journal article" date="2005" name="J. Bacteriol.">
        <title>Completion of the genome sequence of Brucella abortus and comparison to the highly similar genomes of Brucella melitensis and Brucella suis.</title>
        <authorList>
            <person name="Halling S.M."/>
            <person name="Peterson-Burch B.D."/>
            <person name="Bricker B.J."/>
            <person name="Zuerner R.L."/>
            <person name="Qing Z."/>
            <person name="Li L.-L."/>
            <person name="Kapur V."/>
            <person name="Alt D.P."/>
            <person name="Olsen S.C."/>
        </authorList>
    </citation>
    <scope>NUCLEOTIDE SEQUENCE [LARGE SCALE GENOMIC DNA]</scope>
    <source>
        <strain>9-941</strain>
    </source>
</reference>